<dbReference type="EMBL" id="AJ251914">
    <property type="protein sequence ID" value="CAB63863.1"/>
    <property type="molecule type" value="Genomic_DNA"/>
</dbReference>
<dbReference type="EMBL" id="Z97401">
    <property type="protein sequence ID" value="CAB10689.1"/>
    <property type="molecule type" value="Genomic_DNA"/>
</dbReference>
<dbReference type="RefSeq" id="NP_001161063.1">
    <property type="nucleotide sequence ID" value="NM_001167591.2"/>
</dbReference>
<dbReference type="RefSeq" id="XP_005665811.1">
    <property type="nucleotide sequence ID" value="XM_005665754.3"/>
</dbReference>
<dbReference type="SMR" id="Q9TSV4"/>
<dbReference type="FunCoup" id="Q9TSV4">
    <property type="interactions" value="101"/>
</dbReference>
<dbReference type="STRING" id="9823.ENSSSCP00000030891"/>
<dbReference type="GlyGen" id="Q9TSV4">
    <property type="glycosylation" value="1 site"/>
</dbReference>
<dbReference type="PaxDb" id="9823-ENSSSCP00000030891"/>
<dbReference type="Ensembl" id="ENSSSCT00000107655.1">
    <property type="protein sequence ID" value="ENSSSCP00000082049.1"/>
    <property type="gene ID" value="ENSSSCG00000001392.6"/>
</dbReference>
<dbReference type="Ensembl" id="ENSSSCT00070048510.1">
    <property type="protein sequence ID" value="ENSSSCP00070040962.1"/>
    <property type="gene ID" value="ENSSSCG00070024292.1"/>
</dbReference>
<dbReference type="Ensembl" id="ENSSSCT00115021818">
    <property type="protein sequence ID" value="ENSSSCP00115020660"/>
    <property type="gene ID" value="ENSSSCG00115012650"/>
</dbReference>
<dbReference type="GeneID" id="100152381"/>
<dbReference type="KEGG" id="ssc:100152381"/>
<dbReference type="CTD" id="6941"/>
<dbReference type="eggNOG" id="ENOG502RHCY">
    <property type="taxonomic scope" value="Eukaryota"/>
</dbReference>
<dbReference type="GeneTree" id="ENSGT00390000015391"/>
<dbReference type="HOGENOM" id="CLU_041089_0_0_1"/>
<dbReference type="InParanoid" id="Q9TSV4"/>
<dbReference type="OMA" id="IWFHVAC"/>
<dbReference type="OrthoDB" id="436852at2759"/>
<dbReference type="TreeFam" id="TF334697"/>
<dbReference type="Proteomes" id="UP000008227">
    <property type="component" value="Unplaced"/>
</dbReference>
<dbReference type="Proteomes" id="UP000314985">
    <property type="component" value="Chromosome 7"/>
</dbReference>
<dbReference type="Proteomes" id="UP000694570">
    <property type="component" value="Unplaced"/>
</dbReference>
<dbReference type="Proteomes" id="UP000694571">
    <property type="component" value="Unplaced"/>
</dbReference>
<dbReference type="Proteomes" id="UP000694720">
    <property type="component" value="Unplaced"/>
</dbReference>
<dbReference type="Proteomes" id="UP000694722">
    <property type="component" value="Unplaced"/>
</dbReference>
<dbReference type="Proteomes" id="UP000694723">
    <property type="component" value="Unplaced"/>
</dbReference>
<dbReference type="Proteomes" id="UP000694724">
    <property type="component" value="Unplaced"/>
</dbReference>
<dbReference type="Proteomes" id="UP000694725">
    <property type="component" value="Unplaced"/>
</dbReference>
<dbReference type="Proteomes" id="UP000694726">
    <property type="component" value="Unplaced"/>
</dbReference>
<dbReference type="Proteomes" id="UP000694727">
    <property type="component" value="Unplaced"/>
</dbReference>
<dbReference type="Proteomes" id="UP000694728">
    <property type="component" value="Unplaced"/>
</dbReference>
<dbReference type="GO" id="GO:0005634">
    <property type="term" value="C:nucleus"/>
    <property type="evidence" value="ECO:0000318"/>
    <property type="project" value="GO_Central"/>
</dbReference>
<dbReference type="GO" id="GO:0008270">
    <property type="term" value="F:zinc ion binding"/>
    <property type="evidence" value="ECO:0007669"/>
    <property type="project" value="UniProtKB-KW"/>
</dbReference>
<dbReference type="GO" id="GO:0010468">
    <property type="term" value="P:regulation of gene expression"/>
    <property type="evidence" value="ECO:0000318"/>
    <property type="project" value="GO_Central"/>
</dbReference>
<dbReference type="CDD" id="cd22685">
    <property type="entry name" value="FHA_TCF19"/>
    <property type="match status" value="1"/>
</dbReference>
<dbReference type="CDD" id="cd15609">
    <property type="entry name" value="PHD_TCF19"/>
    <property type="match status" value="1"/>
</dbReference>
<dbReference type="Gene3D" id="2.60.200.20">
    <property type="match status" value="1"/>
</dbReference>
<dbReference type="Gene3D" id="3.30.40.10">
    <property type="entry name" value="Zinc/RING finger domain, C3HC4 (zinc finger)"/>
    <property type="match status" value="1"/>
</dbReference>
<dbReference type="InterPro" id="IPR000253">
    <property type="entry name" value="FHA_dom"/>
</dbReference>
<dbReference type="InterPro" id="IPR008984">
    <property type="entry name" value="SMAD_FHA_dom_sf"/>
</dbReference>
<dbReference type="InterPro" id="IPR042803">
    <property type="entry name" value="TCF19"/>
</dbReference>
<dbReference type="InterPro" id="IPR039095">
    <property type="entry name" value="TCF19_PHD"/>
</dbReference>
<dbReference type="InterPro" id="IPR019786">
    <property type="entry name" value="Zinc_finger_PHD-type_CS"/>
</dbReference>
<dbReference type="InterPro" id="IPR011011">
    <property type="entry name" value="Znf_FYVE_PHD"/>
</dbReference>
<dbReference type="InterPro" id="IPR001965">
    <property type="entry name" value="Znf_PHD"/>
</dbReference>
<dbReference type="InterPro" id="IPR019787">
    <property type="entry name" value="Znf_PHD-finger"/>
</dbReference>
<dbReference type="InterPro" id="IPR013083">
    <property type="entry name" value="Znf_RING/FYVE/PHD"/>
</dbReference>
<dbReference type="PANTHER" id="PTHR15464">
    <property type="entry name" value="TRANSCRIPTION FACTOR 19"/>
    <property type="match status" value="1"/>
</dbReference>
<dbReference type="PANTHER" id="PTHR15464:SF1">
    <property type="entry name" value="TRANSCRIPTION FACTOR 19"/>
    <property type="match status" value="1"/>
</dbReference>
<dbReference type="Pfam" id="PF00498">
    <property type="entry name" value="FHA"/>
    <property type="match status" value="1"/>
</dbReference>
<dbReference type="Pfam" id="PF00628">
    <property type="entry name" value="PHD"/>
    <property type="match status" value="1"/>
</dbReference>
<dbReference type="SMART" id="SM00240">
    <property type="entry name" value="FHA"/>
    <property type="match status" value="1"/>
</dbReference>
<dbReference type="SMART" id="SM00249">
    <property type="entry name" value="PHD"/>
    <property type="match status" value="1"/>
</dbReference>
<dbReference type="SUPFAM" id="SSF57903">
    <property type="entry name" value="FYVE/PHD zinc finger"/>
    <property type="match status" value="1"/>
</dbReference>
<dbReference type="SUPFAM" id="SSF49879">
    <property type="entry name" value="SMAD/FHA domain"/>
    <property type="match status" value="1"/>
</dbReference>
<dbReference type="PROSITE" id="PS50006">
    <property type="entry name" value="FHA_DOMAIN"/>
    <property type="match status" value="1"/>
</dbReference>
<dbReference type="PROSITE" id="PS01359">
    <property type="entry name" value="ZF_PHD_1"/>
    <property type="match status" value="1"/>
</dbReference>
<comment type="function">
    <text evidence="1">Potential transcription factor that may play a role in the regulation of genes involved in cell cycle G1/S transition (By similarity). May bind to regulatory elements of genes, including the promoter of the transcription factor FOXO1 (By similarity).</text>
</comment>
<comment type="subcellular location">
    <subcellularLocation>
        <location evidence="1">Nucleus</location>
    </subcellularLocation>
</comment>
<evidence type="ECO:0000250" key="1">
    <source>
        <dbReference type="UniProtKB" id="Q9Y242"/>
    </source>
</evidence>
<evidence type="ECO:0000255" key="2">
    <source>
        <dbReference type="PROSITE-ProRule" id="PRU00086"/>
    </source>
</evidence>
<evidence type="ECO:0000255" key="3">
    <source>
        <dbReference type="PROSITE-ProRule" id="PRU00146"/>
    </source>
</evidence>
<evidence type="ECO:0000256" key="4">
    <source>
        <dbReference type="SAM" id="MobiDB-lite"/>
    </source>
</evidence>
<feature type="chain" id="PRO_0000059329" description="Transcription factor 19">
    <location>
        <begin position="1"/>
        <end position="346"/>
    </location>
</feature>
<feature type="domain" description="FHA" evidence="2">
    <location>
        <begin position="31"/>
        <end position="88"/>
    </location>
</feature>
<feature type="zinc finger region" description="PHD-type" evidence="3">
    <location>
        <begin position="294"/>
        <end position="343"/>
    </location>
</feature>
<feature type="region of interest" description="Disordered" evidence="4">
    <location>
        <begin position="136"/>
        <end position="168"/>
    </location>
</feature>
<feature type="region of interest" description="Disordered" evidence="4">
    <location>
        <begin position="190"/>
        <end position="289"/>
    </location>
</feature>
<feature type="compositionally biased region" description="Basic and acidic residues" evidence="4">
    <location>
        <begin position="138"/>
        <end position="147"/>
    </location>
</feature>
<feature type="compositionally biased region" description="Polar residues" evidence="4">
    <location>
        <begin position="190"/>
        <end position="208"/>
    </location>
</feature>
<feature type="compositionally biased region" description="Basic and acidic residues" evidence="4">
    <location>
        <begin position="250"/>
        <end position="260"/>
    </location>
</feature>
<feature type="binding site" evidence="3">
    <location>
        <position position="297"/>
    </location>
    <ligand>
        <name>Zn(2+)</name>
        <dbReference type="ChEBI" id="CHEBI:29105"/>
        <label>1</label>
    </ligand>
</feature>
<feature type="binding site" evidence="3">
    <location>
        <position position="299"/>
    </location>
    <ligand>
        <name>Zn(2+)</name>
        <dbReference type="ChEBI" id="CHEBI:29105"/>
        <label>1</label>
    </ligand>
</feature>
<feature type="binding site" evidence="3">
    <location>
        <position position="311"/>
    </location>
    <ligand>
        <name>Zn(2+)</name>
        <dbReference type="ChEBI" id="CHEBI:29105"/>
        <label>2</label>
    </ligand>
</feature>
<feature type="binding site" evidence="3">
    <location>
        <position position="314"/>
    </location>
    <ligand>
        <name>Zn(2+)</name>
        <dbReference type="ChEBI" id="CHEBI:29105"/>
        <label>2</label>
    </ligand>
</feature>
<feature type="binding site" evidence="3">
    <location>
        <position position="319"/>
    </location>
    <ligand>
        <name>Zn(2+)</name>
        <dbReference type="ChEBI" id="CHEBI:29105"/>
        <label>1</label>
    </ligand>
</feature>
<feature type="binding site" evidence="3">
    <location>
        <position position="322"/>
    </location>
    <ligand>
        <name>Zn(2+)</name>
        <dbReference type="ChEBI" id="CHEBI:29105"/>
        <label>1</label>
    </ligand>
</feature>
<feature type="binding site" evidence="3">
    <location>
        <position position="337"/>
    </location>
    <ligand>
        <name>Zn(2+)</name>
        <dbReference type="ChEBI" id="CHEBI:29105"/>
        <label>2</label>
    </ligand>
</feature>
<feature type="binding site" evidence="3">
    <location>
        <position position="340"/>
    </location>
    <ligand>
        <name>Zn(2+)</name>
        <dbReference type="ChEBI" id="CHEBI:29105"/>
        <label>2</label>
    </ligand>
</feature>
<feature type="modified residue" description="Phosphoserine" evidence="1">
    <location>
        <position position="78"/>
    </location>
</feature>
<proteinExistence type="inferred from homology"/>
<name>TCF19_PIG</name>
<keyword id="KW-0479">Metal-binding</keyword>
<keyword id="KW-0539">Nucleus</keyword>
<keyword id="KW-0597">Phosphoprotein</keyword>
<keyword id="KW-1185">Reference proteome</keyword>
<keyword id="KW-0804">Transcription</keyword>
<keyword id="KW-0805">Transcription regulation</keyword>
<keyword id="KW-0862">Zinc</keyword>
<keyword id="KW-0863">Zinc-finger</keyword>
<organism>
    <name type="scientific">Sus scrofa</name>
    <name type="common">Pig</name>
    <dbReference type="NCBI Taxonomy" id="9823"/>
    <lineage>
        <taxon>Eukaryota</taxon>
        <taxon>Metazoa</taxon>
        <taxon>Chordata</taxon>
        <taxon>Craniata</taxon>
        <taxon>Vertebrata</taxon>
        <taxon>Euteleostomi</taxon>
        <taxon>Mammalia</taxon>
        <taxon>Eutheria</taxon>
        <taxon>Laurasiatheria</taxon>
        <taxon>Artiodactyla</taxon>
        <taxon>Suina</taxon>
        <taxon>Suidae</taxon>
        <taxon>Sus</taxon>
    </lineage>
</organism>
<protein>
    <recommendedName>
        <fullName>Transcription factor 19</fullName>
        <shortName>TCF-19</shortName>
    </recommendedName>
    <alternativeName>
        <fullName>Transcription factor SC1</fullName>
    </alternativeName>
</protein>
<sequence>MLPCFQLLRIGGGRGVDLYTFHPPSGAGCTYRLGCRADLCDVALRPQQEPGFISEVHAELHAERRGDDWRVSLEDHSSQGTLVNNVRLPRGHRLELSDGDLLTFGPEGPPGTSPSEFYMFQQVRVKPQDFAAITIPRSRGEEGETRAGFRPMLPSQGAPQRPLSTLSPTPKATLILNSIGSLSKLHLQPLTFSRSGSGPQNPPVSTTPGEVRTTPSAPPPRNRRKSAHRVLAELDDEREAPESLPPVLIEPRKKLLRVEKTPPTPSGNRRGRPRKHPVSIPRAPPAAGGGEPCAAPCCCLPQEETVAWVQCDGCDTWFHVACVGCSIQAAKEADFRCPGCRVGIQS</sequence>
<reference key="1">
    <citation type="journal article" date="2001" name="Tissue Antigens">
        <title>Sequence of the swine major histocompatibility complex region containing all non-classical class I genes.</title>
        <authorList>
            <person name="Chardon P."/>
            <person name="Rogel-Gaillard C."/>
            <person name="Cattolico L."/>
            <person name="Duprat S."/>
            <person name="Vaiman M."/>
            <person name="Renard C."/>
        </authorList>
    </citation>
    <scope>NUCLEOTIDE SEQUENCE [LARGE SCALE GENOMIC DNA]</scope>
    <source>
        <strain>Large white</strain>
        <tissue>Fibroblast</tissue>
    </source>
</reference>
<reference key="2">
    <citation type="journal article" date="1998" name="Tissue Antigens">
        <title>A first map of the porcine major histocompatibility complex class I region.</title>
        <authorList>
            <person name="Velten F."/>
            <person name="Rogel-Gaillard C."/>
            <person name="Renard C."/>
            <person name="Vaiman M."/>
            <person name="Chardon P."/>
        </authorList>
    </citation>
    <scope>NUCLEOTIDE SEQUENCE [GENOMIC DNA] OF 138-218</scope>
    <source>
        <tissue>Peripheral blood</tissue>
    </source>
</reference>
<gene>
    <name type="primary">TCF19</name>
    <name type="synonym">SC1</name>
</gene>
<accession>Q9TSV4</accession>
<accession>O19083</accession>